<organism>
    <name type="scientific">Californiconus californicus</name>
    <name type="common">California cone</name>
    <name type="synonym">Conus californicus</name>
    <dbReference type="NCBI Taxonomy" id="1736779"/>
    <lineage>
        <taxon>Eukaryota</taxon>
        <taxon>Metazoa</taxon>
        <taxon>Spiralia</taxon>
        <taxon>Lophotrochozoa</taxon>
        <taxon>Mollusca</taxon>
        <taxon>Gastropoda</taxon>
        <taxon>Caenogastropoda</taxon>
        <taxon>Neogastropoda</taxon>
        <taxon>Conoidea</taxon>
        <taxon>Conidae</taxon>
        <taxon>Californiconus</taxon>
    </lineage>
</organism>
<dbReference type="EMBL" id="EF644187">
    <property type="protein sequence ID" value="ABR92957.1"/>
    <property type="molecule type" value="mRNA"/>
</dbReference>
<dbReference type="ConoServer" id="806">
    <property type="toxin name" value="Cal12.1.2e"/>
</dbReference>
<dbReference type="GO" id="GO:0005576">
    <property type="term" value="C:extracellular region"/>
    <property type="evidence" value="ECO:0007669"/>
    <property type="project" value="UniProtKB-SubCell"/>
</dbReference>
<dbReference type="GO" id="GO:0099106">
    <property type="term" value="F:ion channel regulator activity"/>
    <property type="evidence" value="ECO:0007669"/>
    <property type="project" value="UniProtKB-KW"/>
</dbReference>
<dbReference type="GO" id="GO:0090729">
    <property type="term" value="F:toxin activity"/>
    <property type="evidence" value="ECO:0007669"/>
    <property type="project" value="UniProtKB-KW"/>
</dbReference>
<evidence type="ECO:0000250" key="1"/>
<evidence type="ECO:0000305" key="2"/>
<sequence>DVCDSLVGGRCIHNGCWCERSAPHGNCCNTSGCTATFWCPGTLFD</sequence>
<name>COC2E_CONCL</name>
<feature type="peptide" id="PRO_0000392273" description="Mu-conotoxin-like Cal 12.1.2e">
    <location>
        <begin position="1"/>
        <end position="45"/>
    </location>
</feature>
<feature type="modified residue" description="6'-bromotryptophan" evidence="1">
    <location>
        <position position="17"/>
    </location>
</feature>
<feature type="modified residue" description="4-hydroxyproline" evidence="1">
    <location>
        <position position="23"/>
    </location>
</feature>
<feature type="modified residue" description="6'-bromotryptophan" evidence="1">
    <location>
        <position position="38"/>
    </location>
</feature>
<feature type="modified residue" description="4-hydroxyproline" evidence="1">
    <location>
        <position position="40"/>
    </location>
</feature>
<feature type="disulfide bond" evidence="2">
    <location>
        <begin position="3"/>
        <end position="16"/>
    </location>
</feature>
<feature type="disulfide bond" evidence="1">
    <location>
        <begin position="11"/>
        <end position="28"/>
    </location>
</feature>
<feature type="disulfide bond" evidence="1">
    <location>
        <begin position="18"/>
        <end position="33"/>
    </location>
</feature>
<feature type="disulfide bond" evidence="1">
    <location>
        <begin position="27"/>
        <end position="39"/>
    </location>
</feature>
<protein>
    <recommendedName>
        <fullName>Mu-conotoxin-like Cal 12.1.2e</fullName>
    </recommendedName>
    <alternativeName>
        <fullName>Conotoxin CalTx 12.1.3C</fullName>
    </alternativeName>
</protein>
<accession>A6YR33</accession>
<keyword id="KW-0102">Bromination</keyword>
<keyword id="KW-1015">Disulfide bond</keyword>
<keyword id="KW-0379">Hydroxylation</keyword>
<keyword id="KW-0872">Ion channel impairing toxin</keyword>
<keyword id="KW-0528">Neurotoxin</keyword>
<keyword id="KW-0964">Secreted</keyword>
<keyword id="KW-0800">Toxin</keyword>
<proteinExistence type="evidence at transcript level"/>
<reference key="1">
    <citation type="journal article" date="2011" name="J. Exp. Biol.">
        <title>A diverse family of novel peptide toxins from an unusual cone snail, Conus californicus.</title>
        <authorList>
            <person name="Gilly W.F."/>
            <person name="Richmond T.A."/>
            <person name="Duda T.F. Jr."/>
            <person name="Elliger C."/>
            <person name="Lebaric Z."/>
            <person name="Schulz J."/>
            <person name="Bingham J.P."/>
            <person name="Sweedler J.V."/>
        </authorList>
    </citation>
    <scope>NUCLEOTIDE SEQUENCE [MRNA]</scope>
    <source>
        <tissue>Venom duct</tissue>
    </source>
</reference>
<comment type="function">
    <text evidence="1">Mu-conotoxins block voltage-gated sodium channels. This toxin reversibly blocks voltage-gated sodium channel in cephalopods, with no alteration in the voltage dependence of sodium conductance or on the kinetics of inactivation (By similarity).</text>
</comment>
<comment type="subcellular location">
    <subcellularLocation>
        <location evidence="1">Secreted</location>
    </subcellularLocation>
</comment>
<comment type="tissue specificity">
    <text>Expressed by the venom duct.</text>
</comment>
<comment type="domain">
    <text>The cysteine framework is XII (C-C-C-C-CC-C-C).</text>
</comment>